<keyword id="KW-0458">Lysosome</keyword>
<keyword id="KW-0472">Membrane</keyword>
<keyword id="KW-0479">Metal-binding</keyword>
<keyword id="KW-1185">Reference proteome</keyword>
<keyword id="KW-0677">Repeat</keyword>
<keyword id="KW-0853">WD repeat</keyword>
<keyword id="KW-0862">Zinc</keyword>
<keyword id="KW-0863">Zinc-finger</keyword>
<feature type="chain" id="PRO_0000329407" description="GATOR2 complex protein MIOS">
    <location>
        <begin position="1"/>
        <end position="876"/>
    </location>
</feature>
<feature type="repeat" description="WD 1">
    <location>
        <begin position="59"/>
        <end position="101"/>
    </location>
</feature>
<feature type="repeat" description="WD 2">
    <location>
        <begin position="112"/>
        <end position="156"/>
    </location>
</feature>
<feature type="repeat" description="WD 3">
    <location>
        <begin position="182"/>
        <end position="222"/>
    </location>
</feature>
<feature type="repeat" description="WD 4">
    <location>
        <begin position="224"/>
        <end position="262"/>
    </location>
</feature>
<feature type="repeat" description="WD 5">
    <location>
        <begin position="266"/>
        <end position="307"/>
    </location>
</feature>
<feature type="repeat" description="WD 6">
    <location>
        <begin position="400"/>
        <end position="440"/>
    </location>
</feature>
<feature type="zinc finger region" description="C4-type" evidence="1">
    <location>
        <begin position="738"/>
        <end position="784"/>
    </location>
</feature>
<feature type="zinc finger region" description="RING-type; atypical" evidence="1">
    <location>
        <begin position="785"/>
        <end position="866"/>
    </location>
</feature>
<feature type="binding site" evidence="1">
    <location>
        <position position="740"/>
    </location>
    <ligand>
        <name>Zn(2+)</name>
        <dbReference type="ChEBI" id="CHEBI:29105"/>
        <label>1</label>
    </ligand>
</feature>
<feature type="binding site" evidence="1">
    <location>
        <position position="743"/>
    </location>
    <ligand>
        <name>Zn(2+)</name>
        <dbReference type="ChEBI" id="CHEBI:29105"/>
        <label>1</label>
    </ligand>
</feature>
<feature type="binding site" evidence="1">
    <location>
        <position position="778"/>
    </location>
    <ligand>
        <name>Zn(2+)</name>
        <dbReference type="ChEBI" id="CHEBI:29105"/>
        <label>1</label>
    </ligand>
</feature>
<feature type="binding site" evidence="1">
    <location>
        <position position="781"/>
    </location>
    <ligand>
        <name>Zn(2+)</name>
        <dbReference type="ChEBI" id="CHEBI:29105"/>
        <label>1</label>
    </ligand>
</feature>
<feature type="binding site" evidence="1">
    <location>
        <position position="791"/>
    </location>
    <ligand>
        <name>Zn(2+)</name>
        <dbReference type="ChEBI" id="CHEBI:29105"/>
        <label>2</label>
    </ligand>
</feature>
<feature type="binding site" evidence="1">
    <location>
        <position position="830"/>
    </location>
    <ligand>
        <name>Zn(2+)</name>
        <dbReference type="ChEBI" id="CHEBI:29105"/>
        <label>3</label>
    </ligand>
</feature>
<feature type="binding site" evidence="1">
    <location>
        <position position="833"/>
    </location>
    <ligand>
        <name>Zn(2+)</name>
        <dbReference type="ChEBI" id="CHEBI:29105"/>
        <label>3</label>
    </ligand>
</feature>
<feature type="binding site" evidence="1">
    <location>
        <position position="833"/>
    </location>
    <ligand>
        <name>Zn(2+)</name>
        <dbReference type="ChEBI" id="CHEBI:29105"/>
        <label>4</label>
    </ligand>
</feature>
<feature type="binding site" evidence="1">
    <location>
        <position position="835"/>
    </location>
    <ligand>
        <name>Zn(2+)</name>
        <dbReference type="ChEBI" id="CHEBI:29105"/>
        <label>4</label>
    </ligand>
</feature>
<feature type="binding site" evidence="1">
    <location>
        <position position="838"/>
    </location>
    <ligand>
        <name>Zn(2+)</name>
        <dbReference type="ChEBI" id="CHEBI:29105"/>
        <label>2</label>
    </ligand>
</feature>
<feature type="binding site" evidence="1">
    <location>
        <position position="841"/>
    </location>
    <ligand>
        <name>Zn(2+)</name>
        <dbReference type="ChEBI" id="CHEBI:29105"/>
        <label>2</label>
    </ligand>
</feature>
<feature type="binding site" evidence="1">
    <location>
        <position position="852"/>
    </location>
    <ligand>
        <name>Zn(2+)</name>
        <dbReference type="ChEBI" id="CHEBI:29105"/>
        <label>4</label>
    </ligand>
</feature>
<feature type="binding site" evidence="1">
    <location>
        <position position="857"/>
    </location>
    <ligand>
        <name>Zn(2+)</name>
        <dbReference type="ChEBI" id="CHEBI:29105"/>
        <label>4</label>
    </ligand>
</feature>
<feature type="binding site" evidence="1">
    <location>
        <position position="861"/>
    </location>
    <ligand>
        <name>Zn(2+)</name>
        <dbReference type="ChEBI" id="CHEBI:29105"/>
        <label>3</label>
    </ligand>
</feature>
<protein>
    <recommendedName>
        <fullName evidence="2">GATOR2 complex protein MIOS</fullName>
    </recommendedName>
</protein>
<reference key="1">
    <citation type="submission" date="2003-02" db="EMBL/GenBank/DDBJ databases">
        <authorList>
            <consortium name="NIH - Zebrafish Gene Collection (ZGC) project"/>
        </authorList>
    </citation>
    <scope>NUCLEOTIDE SEQUENCE [LARGE SCALE MRNA]</scope>
    <source>
        <strain>AB</strain>
    </source>
</reference>
<evidence type="ECO:0000250" key="1">
    <source>
        <dbReference type="UniProtKB" id="Q9NXC5"/>
    </source>
</evidence>
<evidence type="ECO:0000305" key="2"/>
<evidence type="ECO:0000312" key="3">
    <source>
        <dbReference type="EMBL" id="AAH47198.1"/>
    </source>
</evidence>
<sequence length="876" mass="98182">MSSGYKPDILWSPHHADRYVICDTELSLYRIGPSGSSETKAGALQLSEETAATLLAINSDTPFMKCVAWYPKHEPECLLAVGHTNGRVVLTSLGQSHNSKSKDLAGKEFVPKHARQCNTLAWNPVDSNWLAAGLDKHRADFSVLIWDISSKFSPEAVPAEKVRLSGDADSGLLVTKPLYELGQNDACLSLCWLPRDHQKLLLAGMHRNLAIFDLRNTSQKTFVNTKAIQGVTVDPHFQDRVASYFEGQVAIWDLRKFEKPVFTLNEQPKPLTKVAWCPTRMGLLATLTRDSNIIRLYDMQHTPMPFGDEVEPTIMERGVQPCSESIISSFAWHPSAQNRMVVVSPSRVMNDFTLFERISLAWSSTTSLMWACGRHLYECAEDSGQAAEAEKDIATKMRERAQSRYGHDTVQVWRNHVLAGGDDPQLRSLWYTLHFMKQYTENVEQKQQSNKQSLIYSGIKNIVKSSSGTTETRRCWSGSDRQTDVPRFHSEERSLALQLCGWISQGPDTDVEPFLKSLEQEGEWERAAAVALFNLDIRRAIQILNKGASSEKGDLNLNVVAMALSGYTDEKNSLWREMCSSLRLQLKKPYLCIMFAFLTSEPGAYDGVLYESRVAVRDRVAFACMFLNDAQLPRYIDKLTNEMKEAGNLEGILLTGLTKDGVDLMESYVDRTGDVQTASFCMLKGSPGEVLKDPRVQCWIENYRNLLDAWRFWHKRAEFDIHRSKLDPSSKPLAQVFVSCNFCGKSISYSCSAMPHQGRGFSQYGVSGSPTKSKVTSCPGCRKPLPRCALCLMNMGTPVSSCPGTGKADEKADLTRDKKLAQFNNWFTWCHNCRHGGHAGHMLSWFRDHSECPVSACTCKCMQLDTTGNLVPSDSV</sequence>
<accession>Q802U2</accession>
<comment type="function">
    <text evidence="1">As a component of the GATOR2 complex, functions as an activator of the amino acid-sensing branch of the mTORC1 signaling pathway. The GATOR2 complex indirectly activates mTORC1 through the inhibition of the GATOR1 subcomplex. GATOR2 probably acts as an E3 ubiquitin-protein ligase toward GATOR1. In the presence of abundant amino acids, the GATOR2 complex mediates ubiquitination of the NPRL2 core component of the GATOR1 complex, leading to GATOR1 inactivation. In the absence of amino acids, GATOR2 is inhibited, activating the GATOR1 complex. Within the GATOR2 complex, MIOS is required to prevent autoubiquitination of WDR24, the catalytic subunit of the complex.</text>
</comment>
<comment type="activity regulation">
    <text evidence="1">The GATOR2 complex is negatively regulated by the upstream amino acid sensors CASTOR1 and SESN2, which sequester the GATOR2 complex in absence of amino acids. In the presence of abundant amino acids, GATOR2 is released from CASTOR1 and SESN2 and activated.</text>
</comment>
<comment type="subunit">
    <text evidence="1">Component of the GATOR2 subcomplex, composed of MIOS, SEC13, SEH1L, WDR24 and WDR59. The GATOR2 complex interacts with CASTOR1 and CASTOR2; the interaction is negatively regulated by arginine. The GATOR2 complex interacts with SESN1, SESN2 and SESN3; the interaction is negatively regulated by amino acids. Interacts with SAR1; the interaction is direct, disrupted by leucine and mediates the interaction of SAR1 with the GATOR2 complex to negatively regulate the TORC1 signaling upon leucine deprivation (By similarity).</text>
</comment>
<comment type="subcellular location">
    <subcellularLocation>
        <location evidence="1">Lysosome membrane</location>
    </subcellularLocation>
</comment>
<comment type="similarity">
    <text evidence="2">Belongs to the WD repeat mio family.</text>
</comment>
<gene>
    <name evidence="1" type="primary">mios</name>
    <name evidence="3" type="ORF">zgc:55958</name>
</gene>
<proteinExistence type="evidence at transcript level"/>
<dbReference type="EMBL" id="BC047198">
    <property type="protein sequence ID" value="AAH47198.1"/>
    <property type="molecule type" value="mRNA"/>
</dbReference>
<dbReference type="RefSeq" id="NP_958490.1">
    <property type="nucleotide sequence ID" value="NM_201333.1"/>
</dbReference>
<dbReference type="SMR" id="Q802U2"/>
<dbReference type="FunCoup" id="Q802U2">
    <property type="interactions" value="1427"/>
</dbReference>
<dbReference type="STRING" id="7955.ENSDARP00000132748"/>
<dbReference type="PaxDb" id="7955-ENSDARP00000109722"/>
<dbReference type="Ensembl" id="ENSDART00000169697">
    <property type="protein sequence ID" value="ENSDARP00000132748"/>
    <property type="gene ID" value="ENSDARG00000102587"/>
</dbReference>
<dbReference type="GeneID" id="393208"/>
<dbReference type="KEGG" id="dre:393208"/>
<dbReference type="AGR" id="ZFIN:ZDB-GENE-040426-856"/>
<dbReference type="CTD" id="54468"/>
<dbReference type="ZFIN" id="ZDB-GENE-040426-856">
    <property type="gene designation" value="mios"/>
</dbReference>
<dbReference type="eggNOG" id="KOG1008">
    <property type="taxonomic scope" value="Eukaryota"/>
</dbReference>
<dbReference type="InParanoid" id="Q802U2"/>
<dbReference type="OMA" id="YWIASYL"/>
<dbReference type="OrthoDB" id="341486at2759"/>
<dbReference type="PhylomeDB" id="Q802U2"/>
<dbReference type="TreeFam" id="TF324074"/>
<dbReference type="PRO" id="PR:Q802U2"/>
<dbReference type="Proteomes" id="UP000000437">
    <property type="component" value="Chromosome 16"/>
</dbReference>
<dbReference type="Bgee" id="ENSDARG00000102587">
    <property type="expression patterns" value="Expressed in blastula and 27 other cell types or tissues"/>
</dbReference>
<dbReference type="ExpressionAtlas" id="Q802U2">
    <property type="expression patterns" value="baseline"/>
</dbReference>
<dbReference type="GO" id="GO:0005737">
    <property type="term" value="C:cytoplasm"/>
    <property type="evidence" value="ECO:0000318"/>
    <property type="project" value="GO_Central"/>
</dbReference>
<dbReference type="GO" id="GO:0061700">
    <property type="term" value="C:GATOR2 complex"/>
    <property type="evidence" value="ECO:0000250"/>
    <property type="project" value="UniProtKB"/>
</dbReference>
<dbReference type="GO" id="GO:0005765">
    <property type="term" value="C:lysosomal membrane"/>
    <property type="evidence" value="ECO:0000250"/>
    <property type="project" value="UniProtKB"/>
</dbReference>
<dbReference type="GO" id="GO:0008270">
    <property type="term" value="F:zinc ion binding"/>
    <property type="evidence" value="ECO:0007669"/>
    <property type="project" value="UniProtKB-KW"/>
</dbReference>
<dbReference type="GO" id="GO:0034198">
    <property type="term" value="P:cellular response to amino acid starvation"/>
    <property type="evidence" value="ECO:0000318"/>
    <property type="project" value="GO_Central"/>
</dbReference>
<dbReference type="GO" id="GO:0031669">
    <property type="term" value="P:cellular response to nutrient levels"/>
    <property type="evidence" value="ECO:0000250"/>
    <property type="project" value="UniProtKB"/>
</dbReference>
<dbReference type="GO" id="GO:0060047">
    <property type="term" value="P:heart contraction"/>
    <property type="evidence" value="ECO:0000315"/>
    <property type="project" value="ZFIN"/>
</dbReference>
<dbReference type="GO" id="GO:1904263">
    <property type="term" value="P:positive regulation of TORC1 signaling"/>
    <property type="evidence" value="ECO:0000250"/>
    <property type="project" value="UniProtKB"/>
</dbReference>
<dbReference type="GO" id="GO:0060841">
    <property type="term" value="P:venous blood vessel development"/>
    <property type="evidence" value="ECO:0000315"/>
    <property type="project" value="ZFIN"/>
</dbReference>
<dbReference type="CDD" id="cd16691">
    <property type="entry name" value="mRING-H2-C3H3C2_Mio"/>
    <property type="match status" value="1"/>
</dbReference>
<dbReference type="FunFam" id="2.130.10.10:FF:000103">
    <property type="entry name" value="Meiosis regulator for oocyte development"/>
    <property type="match status" value="1"/>
</dbReference>
<dbReference type="Gene3D" id="2.130.10.10">
    <property type="entry name" value="YVTN repeat-like/Quinoprotein amine dehydrogenase"/>
    <property type="match status" value="1"/>
</dbReference>
<dbReference type="InterPro" id="IPR037593">
    <property type="entry name" value="MIOS/Sea4"/>
</dbReference>
<dbReference type="InterPro" id="IPR049092">
    <property type="entry name" value="MIOS_a-sol"/>
</dbReference>
<dbReference type="InterPro" id="IPR015943">
    <property type="entry name" value="WD40/YVTN_repeat-like_dom_sf"/>
</dbReference>
<dbReference type="InterPro" id="IPR036322">
    <property type="entry name" value="WD40_repeat_dom_sf"/>
</dbReference>
<dbReference type="InterPro" id="IPR001680">
    <property type="entry name" value="WD40_rpt"/>
</dbReference>
<dbReference type="InterPro" id="IPR031488">
    <property type="entry name" value="Zn_ribbon_mio"/>
</dbReference>
<dbReference type="PANTHER" id="PTHR16453:SF9">
    <property type="entry name" value="GATOR COMPLEX PROTEIN MIOS"/>
    <property type="match status" value="1"/>
</dbReference>
<dbReference type="PANTHER" id="PTHR16453">
    <property type="entry name" value="WD40 DOMAIN-CONTAINING PROTEIN MIO FAMILY MEMBER"/>
    <property type="match status" value="1"/>
</dbReference>
<dbReference type="Pfam" id="PF21719">
    <property type="entry name" value="MIOS_a-sol"/>
    <property type="match status" value="1"/>
</dbReference>
<dbReference type="Pfam" id="PF21720">
    <property type="entry name" value="MIOS_WD40"/>
    <property type="match status" value="1"/>
</dbReference>
<dbReference type="Pfam" id="PF17034">
    <property type="entry name" value="zinc_ribbon_16"/>
    <property type="match status" value="1"/>
</dbReference>
<dbReference type="SMART" id="SM00320">
    <property type="entry name" value="WD40"/>
    <property type="match status" value="6"/>
</dbReference>
<dbReference type="SUPFAM" id="SSF50978">
    <property type="entry name" value="WD40 repeat-like"/>
    <property type="match status" value="1"/>
</dbReference>
<organism>
    <name type="scientific">Danio rerio</name>
    <name type="common">Zebrafish</name>
    <name type="synonym">Brachydanio rerio</name>
    <dbReference type="NCBI Taxonomy" id="7955"/>
    <lineage>
        <taxon>Eukaryota</taxon>
        <taxon>Metazoa</taxon>
        <taxon>Chordata</taxon>
        <taxon>Craniata</taxon>
        <taxon>Vertebrata</taxon>
        <taxon>Euteleostomi</taxon>
        <taxon>Actinopterygii</taxon>
        <taxon>Neopterygii</taxon>
        <taxon>Teleostei</taxon>
        <taxon>Ostariophysi</taxon>
        <taxon>Cypriniformes</taxon>
        <taxon>Danionidae</taxon>
        <taxon>Danioninae</taxon>
        <taxon>Danio</taxon>
    </lineage>
</organism>
<name>MIOS_DANRE</name>